<reference key="1">
    <citation type="journal article" date="2007" name="PLoS ONE">
        <title>The complete genome sequence and analysis of the Epsilonproteobacterium Arcobacter butzleri.</title>
        <authorList>
            <person name="Miller W.G."/>
            <person name="Parker C.T."/>
            <person name="Rubenfield M."/>
            <person name="Mendz G.L."/>
            <person name="Woesten M.M.S.M."/>
            <person name="Ussery D.W."/>
            <person name="Stolz J.F."/>
            <person name="Binnewies T.T."/>
            <person name="Hallin P.F."/>
            <person name="Wang G."/>
            <person name="Malek J.A."/>
            <person name="Rogosin A."/>
            <person name="Stanker L.H."/>
            <person name="Mandrell R.E."/>
        </authorList>
    </citation>
    <scope>NUCLEOTIDE SEQUENCE [LARGE SCALE GENOMIC DNA]</scope>
    <source>
        <strain>RM4018</strain>
    </source>
</reference>
<keyword id="KW-1185">Reference proteome</keyword>
<keyword id="KW-0687">Ribonucleoprotein</keyword>
<keyword id="KW-0689">Ribosomal protein</keyword>
<keyword id="KW-0694">RNA-binding</keyword>
<keyword id="KW-0699">rRNA-binding</keyword>
<gene>
    <name evidence="1" type="primary">rpsK</name>
    <name type="ordered locus">Abu_1018</name>
</gene>
<organism>
    <name type="scientific">Aliarcobacter butzleri (strain RM4018)</name>
    <name type="common">Arcobacter butzleri</name>
    <dbReference type="NCBI Taxonomy" id="367737"/>
    <lineage>
        <taxon>Bacteria</taxon>
        <taxon>Pseudomonadati</taxon>
        <taxon>Campylobacterota</taxon>
        <taxon>Epsilonproteobacteria</taxon>
        <taxon>Campylobacterales</taxon>
        <taxon>Arcobacteraceae</taxon>
        <taxon>Aliarcobacter</taxon>
    </lineage>
</organism>
<protein>
    <recommendedName>
        <fullName evidence="1">Small ribosomal subunit protein uS11</fullName>
    </recommendedName>
    <alternativeName>
        <fullName evidence="2">30S ribosomal protein S11</fullName>
    </alternativeName>
</protein>
<dbReference type="EMBL" id="CP000361">
    <property type="protein sequence ID" value="ABV67278.1"/>
    <property type="molecule type" value="Genomic_DNA"/>
</dbReference>
<dbReference type="RefSeq" id="WP_004509207.1">
    <property type="nucleotide sequence ID" value="NC_009850.1"/>
</dbReference>
<dbReference type="SMR" id="A8ETK4"/>
<dbReference type="STRING" id="367737.Abu_1018"/>
<dbReference type="GeneID" id="24303889"/>
<dbReference type="KEGG" id="abu:Abu_1018"/>
<dbReference type="eggNOG" id="COG0100">
    <property type="taxonomic scope" value="Bacteria"/>
</dbReference>
<dbReference type="HOGENOM" id="CLU_072439_5_0_7"/>
<dbReference type="Proteomes" id="UP000001136">
    <property type="component" value="Chromosome"/>
</dbReference>
<dbReference type="GO" id="GO:1990904">
    <property type="term" value="C:ribonucleoprotein complex"/>
    <property type="evidence" value="ECO:0007669"/>
    <property type="project" value="UniProtKB-KW"/>
</dbReference>
<dbReference type="GO" id="GO:0005840">
    <property type="term" value="C:ribosome"/>
    <property type="evidence" value="ECO:0007669"/>
    <property type="project" value="UniProtKB-KW"/>
</dbReference>
<dbReference type="GO" id="GO:0019843">
    <property type="term" value="F:rRNA binding"/>
    <property type="evidence" value="ECO:0007669"/>
    <property type="project" value="UniProtKB-UniRule"/>
</dbReference>
<dbReference type="GO" id="GO:0003735">
    <property type="term" value="F:structural constituent of ribosome"/>
    <property type="evidence" value="ECO:0007669"/>
    <property type="project" value="InterPro"/>
</dbReference>
<dbReference type="GO" id="GO:0006412">
    <property type="term" value="P:translation"/>
    <property type="evidence" value="ECO:0007669"/>
    <property type="project" value="UniProtKB-UniRule"/>
</dbReference>
<dbReference type="FunFam" id="3.30.420.80:FF:000001">
    <property type="entry name" value="30S ribosomal protein S11"/>
    <property type="match status" value="1"/>
</dbReference>
<dbReference type="Gene3D" id="3.30.420.80">
    <property type="entry name" value="Ribosomal protein S11"/>
    <property type="match status" value="1"/>
</dbReference>
<dbReference type="HAMAP" id="MF_01310">
    <property type="entry name" value="Ribosomal_uS11"/>
    <property type="match status" value="1"/>
</dbReference>
<dbReference type="InterPro" id="IPR001971">
    <property type="entry name" value="Ribosomal_uS11"/>
</dbReference>
<dbReference type="InterPro" id="IPR019981">
    <property type="entry name" value="Ribosomal_uS11_bac-type"/>
</dbReference>
<dbReference type="InterPro" id="IPR018102">
    <property type="entry name" value="Ribosomal_uS11_CS"/>
</dbReference>
<dbReference type="InterPro" id="IPR036967">
    <property type="entry name" value="Ribosomal_uS11_sf"/>
</dbReference>
<dbReference type="NCBIfam" id="NF003698">
    <property type="entry name" value="PRK05309.1"/>
    <property type="match status" value="1"/>
</dbReference>
<dbReference type="NCBIfam" id="TIGR03632">
    <property type="entry name" value="uS11_bact"/>
    <property type="match status" value="1"/>
</dbReference>
<dbReference type="PANTHER" id="PTHR11759">
    <property type="entry name" value="40S RIBOSOMAL PROTEIN S14/30S RIBOSOMAL PROTEIN S11"/>
    <property type="match status" value="1"/>
</dbReference>
<dbReference type="Pfam" id="PF00411">
    <property type="entry name" value="Ribosomal_S11"/>
    <property type="match status" value="1"/>
</dbReference>
<dbReference type="PIRSF" id="PIRSF002131">
    <property type="entry name" value="Ribosomal_S11"/>
    <property type="match status" value="1"/>
</dbReference>
<dbReference type="SUPFAM" id="SSF53137">
    <property type="entry name" value="Translational machinery components"/>
    <property type="match status" value="1"/>
</dbReference>
<dbReference type="PROSITE" id="PS00054">
    <property type="entry name" value="RIBOSOMAL_S11"/>
    <property type="match status" value="1"/>
</dbReference>
<accession>A8ETK4</accession>
<proteinExistence type="inferred from homology"/>
<feature type="chain" id="PRO_1000067498" description="Small ribosomal subunit protein uS11">
    <location>
        <begin position="1"/>
        <end position="130"/>
    </location>
</feature>
<comment type="function">
    <text evidence="1">Located on the platform of the 30S subunit, it bridges several disparate RNA helices of the 16S rRNA. Forms part of the Shine-Dalgarno cleft in the 70S ribosome.</text>
</comment>
<comment type="subunit">
    <text evidence="1">Part of the 30S ribosomal subunit. Interacts with proteins S7 and S18. Binds to IF-3.</text>
</comment>
<comment type="similarity">
    <text evidence="1">Belongs to the universal ribosomal protein uS11 family.</text>
</comment>
<name>RS11_ALIB4</name>
<sequence>MAKRKVTRKKIVRKNIADGIVHIAASFNNTMVTVTDNAGNAIAWSSAGNLGFKGSKKSTPFAAQAAVEDAMNKAMEHGIKNVGIKIQGPGSGRDTAVKAVGSMDGVRVTWLKDVTPLAHNGCRPPKRRRV</sequence>
<evidence type="ECO:0000255" key="1">
    <source>
        <dbReference type="HAMAP-Rule" id="MF_01310"/>
    </source>
</evidence>
<evidence type="ECO:0000305" key="2"/>